<feature type="chain" id="PRO_0000143574" description="Maturase K">
    <location>
        <begin position="1"/>
        <end position="503"/>
    </location>
</feature>
<keyword id="KW-0150">Chloroplast</keyword>
<keyword id="KW-0507">mRNA processing</keyword>
<keyword id="KW-0934">Plastid</keyword>
<keyword id="KW-0694">RNA-binding</keyword>
<keyword id="KW-0819">tRNA processing</keyword>
<geneLocation type="chloroplast"/>
<name>MATK_PANQU</name>
<dbReference type="EMBL" id="AB044904">
    <property type="protein sequence ID" value="BAB40300.1"/>
    <property type="molecule type" value="Genomic_DNA"/>
</dbReference>
<dbReference type="EMBL" id="AB088001">
    <property type="protein sequence ID" value="BAC81675.1"/>
    <property type="molecule type" value="Genomic_DNA"/>
</dbReference>
<dbReference type="RefSeq" id="YP_009155409.1">
    <property type="nucleotide sequence ID" value="NC_027456.1"/>
</dbReference>
<dbReference type="GeneID" id="25015456"/>
<dbReference type="GO" id="GO:0009507">
    <property type="term" value="C:chloroplast"/>
    <property type="evidence" value="ECO:0007669"/>
    <property type="project" value="UniProtKB-SubCell"/>
</dbReference>
<dbReference type="GO" id="GO:0003723">
    <property type="term" value="F:RNA binding"/>
    <property type="evidence" value="ECO:0007669"/>
    <property type="project" value="UniProtKB-KW"/>
</dbReference>
<dbReference type="GO" id="GO:0006397">
    <property type="term" value="P:mRNA processing"/>
    <property type="evidence" value="ECO:0007669"/>
    <property type="project" value="UniProtKB-KW"/>
</dbReference>
<dbReference type="GO" id="GO:0008380">
    <property type="term" value="P:RNA splicing"/>
    <property type="evidence" value="ECO:0007669"/>
    <property type="project" value="UniProtKB-UniRule"/>
</dbReference>
<dbReference type="GO" id="GO:0008033">
    <property type="term" value="P:tRNA processing"/>
    <property type="evidence" value="ECO:0007669"/>
    <property type="project" value="UniProtKB-KW"/>
</dbReference>
<dbReference type="HAMAP" id="MF_01390">
    <property type="entry name" value="MatK"/>
    <property type="match status" value="1"/>
</dbReference>
<dbReference type="InterPro" id="IPR024937">
    <property type="entry name" value="Domain_X"/>
</dbReference>
<dbReference type="InterPro" id="IPR002866">
    <property type="entry name" value="Maturase_MatK"/>
</dbReference>
<dbReference type="InterPro" id="IPR024942">
    <property type="entry name" value="Maturase_MatK_N"/>
</dbReference>
<dbReference type="PANTHER" id="PTHR34811">
    <property type="entry name" value="MATURASE K"/>
    <property type="match status" value="1"/>
</dbReference>
<dbReference type="PANTHER" id="PTHR34811:SF1">
    <property type="entry name" value="MATURASE K"/>
    <property type="match status" value="1"/>
</dbReference>
<dbReference type="Pfam" id="PF01348">
    <property type="entry name" value="Intron_maturas2"/>
    <property type="match status" value="1"/>
</dbReference>
<dbReference type="Pfam" id="PF01824">
    <property type="entry name" value="MatK_N"/>
    <property type="match status" value="1"/>
</dbReference>
<reference key="1">
    <citation type="journal article" date="2001" name="Planta Med.">
        <title>Phylogenetic analysis based on 18S rRNA gene and matK gene sequences of Panax vietnamensis and five related species.</title>
        <authorList>
            <person name="Komatsu K."/>
            <person name="Zhu S."/>
            <person name="Fushimi H."/>
            <person name="Qui T.K."/>
            <person name="Cai S."/>
            <person name="Kadota S."/>
        </authorList>
    </citation>
    <scope>NUCLEOTIDE SEQUENCE [GENOMIC DNA]</scope>
</reference>
<reference key="2">
    <citation type="journal article" date="2003" name="Planta Med.">
        <title>Phylogenetic relationship in genus Panax: inferred from chloroplast trnK gene and nuclear 18S rRNA gene sequences.</title>
        <authorList>
            <person name="Zhu S."/>
            <person name="Fushimi H."/>
            <person name="Cai S."/>
            <person name="Komatsu K."/>
        </authorList>
    </citation>
    <scope>NUCLEOTIDE SEQUENCE [GENOMIC DNA]</scope>
</reference>
<proteinExistence type="inferred from homology"/>
<comment type="function">
    <text evidence="1">Usually encoded in the trnK tRNA gene intron. Probably assists in splicing its own and other chloroplast group II introns.</text>
</comment>
<comment type="subcellular location">
    <subcellularLocation>
        <location>Plastid</location>
        <location>Chloroplast</location>
    </subcellularLocation>
</comment>
<comment type="similarity">
    <text evidence="1">Belongs to the intron maturase 2 family. MatK subfamily.</text>
</comment>
<evidence type="ECO:0000255" key="1">
    <source>
        <dbReference type="HAMAP-Rule" id="MF_01390"/>
    </source>
</evidence>
<accession>Q9AVL4</accession>
<accession>Q7YIY7</accession>
<sequence length="503" mass="59266">MEEFQRYLELDRSQQHYFLYPLIFQEYIYALAHDHGLNINRSILLENAGYDKKFSLLIVKRLIARMYQQNHLILSTNDSNQNRFLRRNKNLYSQMISEGFAVIVEIPFYLQLKSSLESKGIVKSHNLRSIHSIFPFLEDKISHLIYGLEILIPYPVHLEILVQTLRYWVKDASSLHLLRFFLHEYCNWNTPNKAGSSFSKRNQRLFFLLYNSHLCEYESIFIFLRNQSSHLRSTSSGTLLERIYFYGKIKYLVKVFVKAFQVNLLLLKDPFMHYVRYQGKSILASKGTPFLMKKWTYYFVNLWQCHFYLWSQPGRICINQLYNHSLDILGYLSSARLNPSMVRGQMLENSFLIDNAINKFDAIVPIIPLIGSLAKAKFCNVLGHPISKAVWTDLSDSDIIDQFGRICRNLSHYHSGSSQKKSLYRIKYILRLSCARTLARKHKSTVRAFLKRLGSGLLEEFFTAEEQVLYLTFPRASSASQRLYRRRIWYLDIICINDLANHE</sequence>
<gene>
    <name evidence="1" type="primary">matK</name>
</gene>
<organism>
    <name type="scientific">Panax quinquefolius</name>
    <name type="common">American ginseng</name>
    <name type="synonym">Aralia quinquefolia</name>
    <dbReference type="NCBI Taxonomy" id="44588"/>
    <lineage>
        <taxon>Eukaryota</taxon>
        <taxon>Viridiplantae</taxon>
        <taxon>Streptophyta</taxon>
        <taxon>Embryophyta</taxon>
        <taxon>Tracheophyta</taxon>
        <taxon>Spermatophyta</taxon>
        <taxon>Magnoliopsida</taxon>
        <taxon>eudicotyledons</taxon>
        <taxon>Gunneridae</taxon>
        <taxon>Pentapetalae</taxon>
        <taxon>asterids</taxon>
        <taxon>campanulids</taxon>
        <taxon>Apiales</taxon>
        <taxon>Araliaceae</taxon>
        <taxon>Panax</taxon>
    </lineage>
</organism>
<protein>
    <recommendedName>
        <fullName evidence="1">Maturase K</fullName>
    </recommendedName>
    <alternativeName>
        <fullName evidence="1">Intron maturase</fullName>
    </alternativeName>
</protein>